<dbReference type="EMBL" id="CU928164">
    <property type="protein sequence ID" value="CAR18453.1"/>
    <property type="molecule type" value="Genomic_DNA"/>
</dbReference>
<dbReference type="RefSeq" id="WP_000050789.1">
    <property type="nucleotide sequence ID" value="NC_011750.1"/>
</dbReference>
<dbReference type="RefSeq" id="YP_002408287.1">
    <property type="nucleotide sequence ID" value="NC_011750.1"/>
</dbReference>
<dbReference type="SMR" id="B7NN01"/>
<dbReference type="STRING" id="585057.ECIAI39_2327"/>
<dbReference type="GeneID" id="75206440"/>
<dbReference type="KEGG" id="ect:ECIAI39_2327"/>
<dbReference type="PATRIC" id="fig|585057.6.peg.2424"/>
<dbReference type="HOGENOM" id="CLU_063050_0_1_6"/>
<dbReference type="Proteomes" id="UP000000749">
    <property type="component" value="Chromosome"/>
</dbReference>
<dbReference type="GO" id="GO:0043590">
    <property type="term" value="C:bacterial nucleoid"/>
    <property type="evidence" value="ECO:0007669"/>
    <property type="project" value="TreeGrafter"/>
</dbReference>
<dbReference type="GO" id="GO:0005737">
    <property type="term" value="C:cytoplasm"/>
    <property type="evidence" value="ECO:0007669"/>
    <property type="project" value="UniProtKB-UniRule"/>
</dbReference>
<dbReference type="GO" id="GO:0003690">
    <property type="term" value="F:double-stranded DNA binding"/>
    <property type="evidence" value="ECO:0007669"/>
    <property type="project" value="TreeGrafter"/>
</dbReference>
<dbReference type="GO" id="GO:0003727">
    <property type="term" value="F:single-stranded RNA binding"/>
    <property type="evidence" value="ECO:0007669"/>
    <property type="project" value="TreeGrafter"/>
</dbReference>
<dbReference type="HAMAP" id="MF_00730">
    <property type="entry name" value="NdpA"/>
    <property type="match status" value="1"/>
</dbReference>
<dbReference type="InterPro" id="IPR007358">
    <property type="entry name" value="Nucleoid_associated_NdpA"/>
</dbReference>
<dbReference type="NCBIfam" id="NF001557">
    <property type="entry name" value="PRK00378.1"/>
    <property type="match status" value="1"/>
</dbReference>
<dbReference type="PANTHER" id="PTHR38772">
    <property type="match status" value="1"/>
</dbReference>
<dbReference type="PANTHER" id="PTHR38772:SF1">
    <property type="entry name" value="NUCLEOID-ASSOCIATED PROTEIN YEJK"/>
    <property type="match status" value="1"/>
</dbReference>
<dbReference type="Pfam" id="PF04245">
    <property type="entry name" value="NA37"/>
    <property type="match status" value="1"/>
</dbReference>
<protein>
    <recommendedName>
        <fullName evidence="1">Nucleoid-associated protein YejK</fullName>
    </recommendedName>
</protein>
<feature type="chain" id="PRO_1000191561" description="Nucleoid-associated protein YejK">
    <location>
        <begin position="1"/>
        <end position="335"/>
    </location>
</feature>
<gene>
    <name evidence="1" type="primary">yejK</name>
    <name type="ordered locus">ECIAI39_2327</name>
</gene>
<accession>B7NN01</accession>
<sequence>MSLDINQIALHQLIKRDEQNLELVLRDSLLEPTETVVEMVAELHRVYSAKNKAYGLFSEESELAQTLRLQRQGEEDFLAFSRAATGRLRDELAKYPFADGGFVLFCHYRYLAVEYLLVAVLSNLSSMRVNENLDINPTHYLDINHADIVARIDLTEWETNPESTRYLTFLKGRVGRKVADFFMDFLGASEGLNAKAQNRGLLQAVDDFTAEAQLDKAERQNVRQQVYSYCNEQLQAGEEIELESLSKELAGVSEVSFTEFAAEKGYELEESFPADRSTLRQLTKFAGSGGGLTINFDAMLLGERIFWDPATDTLTIKGTPPNLRDQLQRRTSGGN</sequence>
<comment type="subcellular location">
    <subcellularLocation>
        <location evidence="1">Cytoplasm</location>
        <location evidence="1">Nucleoid</location>
    </subcellularLocation>
</comment>
<comment type="similarity">
    <text evidence="1">Belongs to the YejK family.</text>
</comment>
<name>NDPA_ECO7I</name>
<keyword id="KW-0963">Cytoplasm</keyword>
<proteinExistence type="inferred from homology"/>
<evidence type="ECO:0000255" key="1">
    <source>
        <dbReference type="HAMAP-Rule" id="MF_00730"/>
    </source>
</evidence>
<reference key="1">
    <citation type="journal article" date="2009" name="PLoS Genet.">
        <title>Organised genome dynamics in the Escherichia coli species results in highly diverse adaptive paths.</title>
        <authorList>
            <person name="Touchon M."/>
            <person name="Hoede C."/>
            <person name="Tenaillon O."/>
            <person name="Barbe V."/>
            <person name="Baeriswyl S."/>
            <person name="Bidet P."/>
            <person name="Bingen E."/>
            <person name="Bonacorsi S."/>
            <person name="Bouchier C."/>
            <person name="Bouvet O."/>
            <person name="Calteau A."/>
            <person name="Chiapello H."/>
            <person name="Clermont O."/>
            <person name="Cruveiller S."/>
            <person name="Danchin A."/>
            <person name="Diard M."/>
            <person name="Dossat C."/>
            <person name="Karoui M.E."/>
            <person name="Frapy E."/>
            <person name="Garry L."/>
            <person name="Ghigo J.M."/>
            <person name="Gilles A.M."/>
            <person name="Johnson J."/>
            <person name="Le Bouguenec C."/>
            <person name="Lescat M."/>
            <person name="Mangenot S."/>
            <person name="Martinez-Jehanne V."/>
            <person name="Matic I."/>
            <person name="Nassif X."/>
            <person name="Oztas S."/>
            <person name="Petit M.A."/>
            <person name="Pichon C."/>
            <person name="Rouy Z."/>
            <person name="Ruf C.S."/>
            <person name="Schneider D."/>
            <person name="Tourret J."/>
            <person name="Vacherie B."/>
            <person name="Vallenet D."/>
            <person name="Medigue C."/>
            <person name="Rocha E.P.C."/>
            <person name="Denamur E."/>
        </authorList>
    </citation>
    <scope>NUCLEOTIDE SEQUENCE [LARGE SCALE GENOMIC DNA]</scope>
    <source>
        <strain>IAI39 / ExPEC</strain>
    </source>
</reference>
<organism>
    <name type="scientific">Escherichia coli O7:K1 (strain IAI39 / ExPEC)</name>
    <dbReference type="NCBI Taxonomy" id="585057"/>
    <lineage>
        <taxon>Bacteria</taxon>
        <taxon>Pseudomonadati</taxon>
        <taxon>Pseudomonadota</taxon>
        <taxon>Gammaproteobacteria</taxon>
        <taxon>Enterobacterales</taxon>
        <taxon>Enterobacteriaceae</taxon>
        <taxon>Escherichia</taxon>
    </lineage>
</organism>